<feature type="chain" id="PRO_1000064667" description="K(+)/H(+) antiporter NhaP2">
    <location>
        <begin position="1"/>
        <end position="577"/>
    </location>
</feature>
<feature type="transmembrane region" description="Helical" evidence="1">
    <location>
        <begin position="3"/>
        <end position="23"/>
    </location>
</feature>
<feature type="transmembrane region" description="Helical" evidence="1">
    <location>
        <begin position="30"/>
        <end position="50"/>
    </location>
</feature>
<feature type="transmembrane region" description="Helical" evidence="1">
    <location>
        <begin position="58"/>
        <end position="78"/>
    </location>
</feature>
<feature type="transmembrane region" description="Helical" evidence="1">
    <location>
        <begin position="95"/>
        <end position="115"/>
    </location>
</feature>
<feature type="transmembrane region" description="Helical" evidence="1">
    <location>
        <begin position="122"/>
        <end position="142"/>
    </location>
</feature>
<feature type="transmembrane region" description="Helical" evidence="1">
    <location>
        <begin position="185"/>
        <end position="205"/>
    </location>
</feature>
<feature type="transmembrane region" description="Helical" evidence="1">
    <location>
        <begin position="216"/>
        <end position="236"/>
    </location>
</feature>
<feature type="transmembrane region" description="Helical" evidence="1">
    <location>
        <begin position="237"/>
        <end position="257"/>
    </location>
</feature>
<feature type="transmembrane region" description="Helical" evidence="1">
    <location>
        <begin position="280"/>
        <end position="300"/>
    </location>
</feature>
<feature type="transmembrane region" description="Helical" evidence="1">
    <location>
        <begin position="303"/>
        <end position="323"/>
    </location>
</feature>
<feature type="transmembrane region" description="Helical" evidence="1">
    <location>
        <begin position="334"/>
        <end position="354"/>
    </location>
</feature>
<feature type="transmembrane region" description="Helical" evidence="1">
    <location>
        <begin position="363"/>
        <end position="383"/>
    </location>
</feature>
<feature type="domain" description="RCK C-terminal" evidence="1">
    <location>
        <begin position="403"/>
        <end position="485"/>
    </location>
</feature>
<gene>
    <name evidence="1" type="primary">nhaP2</name>
    <name type="synonym">cvrA</name>
    <name type="ordered locus">KPN78578_22720</name>
    <name type="ORF">KPN_02307</name>
</gene>
<sequence length="577" mass="62156">MDAAAVISLFILGSVLVTCSILLSSFSSRLGIPILVIFLAIGMLAGIDGIGGIPFDNYPFAYMVSNLALAVILLDGGMRTQASSFRVALWPALSLATVGVLITSALTGMMAAWLFKLDLIEGLLIGAIVGSTDAAAVFSLLGGKGLNERVGSTLEIESGSNDPMAVFLTITLIEMIQQHQTGLSWMFAVHIIQQFGLGIAIGLGGGYLLLQMINRIVLPAGLYPLLALSGGIMIFAVTTSLDGSGILAVYLCGFLLGNRPIRNRHGILQNFDGLAWLAQIAMFLVLGLLVTPSDLLPIAIPALLLSMWMIFIARPLSVFAGLLPFRGFNLRERVFISWVGLRGAVPIILAVFPMMAGLDNARLFFNVAFFVVLVSLLLQGTSLSWAAKKAKVVVPPISWPISRVGLDIHPENPWEQFVYQLGADKWCIGAALRDLHMPPETRIAALFRNNVLLHPTGSTRLREGDILCVIGREHDLPALGKMFSQSPPVALDQRFFGDFILDAEARFADVAQIYGLDGGEEFREHQQSLGEVVQQLLGAAPVVGDQVEFAGMVWTVAEKENDHVLKVGVRVAEDEAE</sequence>
<dbReference type="EMBL" id="CP000647">
    <property type="protein sequence ID" value="ABR77733.1"/>
    <property type="molecule type" value="Genomic_DNA"/>
</dbReference>
<dbReference type="RefSeq" id="WP_002910885.1">
    <property type="nucleotide sequence ID" value="NC_009648.1"/>
</dbReference>
<dbReference type="SMR" id="A6TAW2"/>
<dbReference type="STRING" id="272620.KPN_02307"/>
<dbReference type="PaxDb" id="272620-KPN_02307"/>
<dbReference type="EnsemblBacteria" id="ABR77733">
    <property type="protein sequence ID" value="ABR77733"/>
    <property type="gene ID" value="KPN_02307"/>
</dbReference>
<dbReference type="KEGG" id="kpn:KPN_02307"/>
<dbReference type="HOGENOM" id="CLU_005912_9_2_6"/>
<dbReference type="Proteomes" id="UP000000265">
    <property type="component" value="Chromosome"/>
</dbReference>
<dbReference type="GO" id="GO:0005886">
    <property type="term" value="C:plasma membrane"/>
    <property type="evidence" value="ECO:0007669"/>
    <property type="project" value="UniProtKB-SubCell"/>
</dbReference>
<dbReference type="GO" id="GO:0050660">
    <property type="term" value="F:flavin adenine dinucleotide binding"/>
    <property type="evidence" value="ECO:0007669"/>
    <property type="project" value="InterPro"/>
</dbReference>
<dbReference type="GO" id="GO:0015386">
    <property type="term" value="F:potassium:proton antiporter activity"/>
    <property type="evidence" value="ECO:0007669"/>
    <property type="project" value="UniProtKB-UniRule"/>
</dbReference>
<dbReference type="GO" id="GO:0006884">
    <property type="term" value="P:cell volume homeostasis"/>
    <property type="evidence" value="ECO:0007669"/>
    <property type="project" value="InterPro"/>
</dbReference>
<dbReference type="FunFam" id="1.20.1530.20:FF:000002">
    <property type="entry name" value="K(+)/H(+) antiporter NhaP2"/>
    <property type="match status" value="1"/>
</dbReference>
<dbReference type="Gene3D" id="1.20.1530.20">
    <property type="match status" value="1"/>
</dbReference>
<dbReference type="Gene3D" id="3.30.465.10">
    <property type="match status" value="1"/>
</dbReference>
<dbReference type="Gene3D" id="3.30.70.1450">
    <property type="entry name" value="Regulator of K+ conductance, C-terminal domain"/>
    <property type="match status" value="1"/>
</dbReference>
<dbReference type="HAMAP" id="MF_01075">
    <property type="entry name" value="NhaP2"/>
    <property type="match status" value="1"/>
</dbReference>
<dbReference type="InterPro" id="IPR006153">
    <property type="entry name" value="Cation/H_exchanger_TM"/>
</dbReference>
<dbReference type="InterPro" id="IPR036318">
    <property type="entry name" value="FAD-bd_PCMH-like_sf"/>
</dbReference>
<dbReference type="InterPro" id="IPR016169">
    <property type="entry name" value="FAD-bd_PCMH_sub2"/>
</dbReference>
<dbReference type="InterPro" id="IPR038770">
    <property type="entry name" value="Na+/solute_symporter_sf"/>
</dbReference>
<dbReference type="InterPro" id="IPR023729">
    <property type="entry name" value="NhaP2"/>
</dbReference>
<dbReference type="InterPro" id="IPR006037">
    <property type="entry name" value="RCK_C"/>
</dbReference>
<dbReference type="InterPro" id="IPR036721">
    <property type="entry name" value="RCK_C_sf"/>
</dbReference>
<dbReference type="InterPro" id="IPR005170">
    <property type="entry name" value="Transptr-assoc_dom"/>
</dbReference>
<dbReference type="NCBIfam" id="NF003714">
    <property type="entry name" value="PRK05326.1-1"/>
    <property type="match status" value="1"/>
</dbReference>
<dbReference type="NCBIfam" id="NF003715">
    <property type="entry name" value="PRK05326.1-2"/>
    <property type="match status" value="1"/>
</dbReference>
<dbReference type="NCBIfam" id="NF003716">
    <property type="entry name" value="PRK05326.1-3"/>
    <property type="match status" value="1"/>
</dbReference>
<dbReference type="PANTHER" id="PTHR32507:SF7">
    <property type="entry name" value="K(+)_H(+) ANTIPORTER NHAP2"/>
    <property type="match status" value="1"/>
</dbReference>
<dbReference type="PANTHER" id="PTHR32507">
    <property type="entry name" value="NA(+)/H(+) ANTIPORTER 1"/>
    <property type="match status" value="1"/>
</dbReference>
<dbReference type="Pfam" id="PF03471">
    <property type="entry name" value="CorC_HlyC"/>
    <property type="match status" value="1"/>
</dbReference>
<dbReference type="Pfam" id="PF00999">
    <property type="entry name" value="Na_H_Exchanger"/>
    <property type="match status" value="1"/>
</dbReference>
<dbReference type="Pfam" id="PF02080">
    <property type="entry name" value="TrkA_C"/>
    <property type="match status" value="1"/>
</dbReference>
<dbReference type="SMART" id="SM01091">
    <property type="entry name" value="CorC_HlyC"/>
    <property type="match status" value="1"/>
</dbReference>
<dbReference type="SUPFAM" id="SSF56176">
    <property type="entry name" value="FAD-binding/transporter-associated domain-like"/>
    <property type="match status" value="1"/>
</dbReference>
<dbReference type="SUPFAM" id="SSF116726">
    <property type="entry name" value="TrkA C-terminal domain-like"/>
    <property type="match status" value="1"/>
</dbReference>
<dbReference type="PROSITE" id="PS51202">
    <property type="entry name" value="RCK_C"/>
    <property type="match status" value="1"/>
</dbReference>
<comment type="function">
    <text evidence="1">K(+)/H(+) antiporter that extrudes potassium in exchange for external protons and maintains the internal concentration of potassium under toxic levels.</text>
</comment>
<comment type="catalytic activity">
    <reaction evidence="1">
        <text>K(+)(in) + H(+)(out) = K(+)(out) + H(+)(in)</text>
        <dbReference type="Rhea" id="RHEA:29467"/>
        <dbReference type="ChEBI" id="CHEBI:15378"/>
        <dbReference type="ChEBI" id="CHEBI:29103"/>
    </reaction>
    <physiologicalReaction direction="left-to-right" evidence="1">
        <dbReference type="Rhea" id="RHEA:29468"/>
    </physiologicalReaction>
</comment>
<comment type="subcellular location">
    <subcellularLocation>
        <location evidence="1">Cell inner membrane</location>
        <topology evidence="1">Multi-pass membrane protein</topology>
    </subcellularLocation>
</comment>
<comment type="similarity">
    <text evidence="1">Belongs to the monovalent cation:proton antiporter 1 (CPA1) transporter (TC 2.A.36) family. NhaP2 subfamily.</text>
</comment>
<keyword id="KW-0050">Antiport</keyword>
<keyword id="KW-0997">Cell inner membrane</keyword>
<keyword id="KW-1003">Cell membrane</keyword>
<keyword id="KW-0406">Ion transport</keyword>
<keyword id="KW-0472">Membrane</keyword>
<keyword id="KW-0630">Potassium</keyword>
<keyword id="KW-0633">Potassium transport</keyword>
<keyword id="KW-0812">Transmembrane</keyword>
<keyword id="KW-1133">Transmembrane helix</keyword>
<keyword id="KW-0813">Transport</keyword>
<proteinExistence type="inferred from homology"/>
<accession>A6TAW2</accession>
<name>NHAP2_KLEP7</name>
<reference key="1">
    <citation type="submission" date="2006-09" db="EMBL/GenBank/DDBJ databases">
        <authorList>
            <consortium name="The Klebsiella pneumonia Genome Sequencing Project"/>
            <person name="McClelland M."/>
            <person name="Sanderson E.K."/>
            <person name="Spieth J."/>
            <person name="Clifton W.S."/>
            <person name="Latreille P."/>
            <person name="Sabo A."/>
            <person name="Pepin K."/>
            <person name="Bhonagiri V."/>
            <person name="Porwollik S."/>
            <person name="Ali J."/>
            <person name="Wilson R.K."/>
        </authorList>
    </citation>
    <scope>NUCLEOTIDE SEQUENCE [LARGE SCALE GENOMIC DNA]</scope>
    <source>
        <strain>ATCC 700721 / MGH 78578</strain>
    </source>
</reference>
<protein>
    <recommendedName>
        <fullName evidence="1">K(+)/H(+) antiporter NhaP2</fullName>
    </recommendedName>
    <alternativeName>
        <fullName evidence="1">Potassium/proton antiporter NhaP2</fullName>
    </alternativeName>
</protein>
<evidence type="ECO:0000255" key="1">
    <source>
        <dbReference type="HAMAP-Rule" id="MF_01075"/>
    </source>
</evidence>
<organism>
    <name type="scientific">Klebsiella pneumoniae subsp. pneumoniae (strain ATCC 700721 / MGH 78578)</name>
    <dbReference type="NCBI Taxonomy" id="272620"/>
    <lineage>
        <taxon>Bacteria</taxon>
        <taxon>Pseudomonadati</taxon>
        <taxon>Pseudomonadota</taxon>
        <taxon>Gammaproteobacteria</taxon>
        <taxon>Enterobacterales</taxon>
        <taxon>Enterobacteriaceae</taxon>
        <taxon>Klebsiella/Raoultella group</taxon>
        <taxon>Klebsiella</taxon>
        <taxon>Klebsiella pneumoniae complex</taxon>
    </lineage>
</organism>